<evidence type="ECO:0000255" key="1">
    <source>
        <dbReference type="HAMAP-Rule" id="MF_01208"/>
    </source>
</evidence>
<dbReference type="EC" id="2.4.2.10" evidence="1"/>
<dbReference type="EMBL" id="CP000923">
    <property type="protein sequence ID" value="ABY93095.1"/>
    <property type="molecule type" value="Genomic_DNA"/>
</dbReference>
<dbReference type="RefSeq" id="WP_012268739.1">
    <property type="nucleotide sequence ID" value="NC_010320.1"/>
</dbReference>
<dbReference type="SMR" id="B0K2E4"/>
<dbReference type="KEGG" id="tex:Teth514_1813"/>
<dbReference type="HOGENOM" id="CLU_074878_3_0_9"/>
<dbReference type="UniPathway" id="UPA00070">
    <property type="reaction ID" value="UER00119"/>
</dbReference>
<dbReference type="Proteomes" id="UP000002155">
    <property type="component" value="Chromosome"/>
</dbReference>
<dbReference type="GO" id="GO:0000287">
    <property type="term" value="F:magnesium ion binding"/>
    <property type="evidence" value="ECO:0007669"/>
    <property type="project" value="UniProtKB-UniRule"/>
</dbReference>
<dbReference type="GO" id="GO:0004588">
    <property type="term" value="F:orotate phosphoribosyltransferase activity"/>
    <property type="evidence" value="ECO:0007669"/>
    <property type="project" value="UniProtKB-UniRule"/>
</dbReference>
<dbReference type="GO" id="GO:0044205">
    <property type="term" value="P:'de novo' UMP biosynthetic process"/>
    <property type="evidence" value="ECO:0007669"/>
    <property type="project" value="UniProtKB-UniRule"/>
</dbReference>
<dbReference type="GO" id="GO:0019856">
    <property type="term" value="P:pyrimidine nucleobase biosynthetic process"/>
    <property type="evidence" value="ECO:0007669"/>
    <property type="project" value="InterPro"/>
</dbReference>
<dbReference type="CDD" id="cd06223">
    <property type="entry name" value="PRTases_typeI"/>
    <property type="match status" value="1"/>
</dbReference>
<dbReference type="Gene3D" id="3.40.50.2020">
    <property type="match status" value="1"/>
</dbReference>
<dbReference type="HAMAP" id="MF_01208">
    <property type="entry name" value="PyrE"/>
    <property type="match status" value="1"/>
</dbReference>
<dbReference type="InterPro" id="IPR023031">
    <property type="entry name" value="OPRT"/>
</dbReference>
<dbReference type="InterPro" id="IPR006273">
    <property type="entry name" value="Orotate_PRibTrfase_bac"/>
</dbReference>
<dbReference type="InterPro" id="IPR000836">
    <property type="entry name" value="PRibTrfase_dom"/>
</dbReference>
<dbReference type="InterPro" id="IPR029057">
    <property type="entry name" value="PRTase-like"/>
</dbReference>
<dbReference type="NCBIfam" id="TIGR01367">
    <property type="entry name" value="pyrE_Therm"/>
    <property type="match status" value="1"/>
</dbReference>
<dbReference type="PANTHER" id="PTHR19278">
    <property type="entry name" value="OROTATE PHOSPHORIBOSYLTRANSFERASE"/>
    <property type="match status" value="1"/>
</dbReference>
<dbReference type="PANTHER" id="PTHR19278:SF9">
    <property type="entry name" value="URIDINE 5'-MONOPHOSPHATE SYNTHASE"/>
    <property type="match status" value="1"/>
</dbReference>
<dbReference type="Pfam" id="PF00156">
    <property type="entry name" value="Pribosyltran"/>
    <property type="match status" value="1"/>
</dbReference>
<dbReference type="SUPFAM" id="SSF53271">
    <property type="entry name" value="PRTase-like"/>
    <property type="match status" value="1"/>
</dbReference>
<dbReference type="PROSITE" id="PS00103">
    <property type="entry name" value="PUR_PYR_PR_TRANSFER"/>
    <property type="match status" value="1"/>
</dbReference>
<accession>B0K2E4</accession>
<sequence>MEKEEVLEIFSKLGVINKGHFLLTSGKHSDTYLQCAKIFQYPKYSEIFSKELALKFKGHEIDVVIGPAIGGIILAYEVARQVGAKALFAEREEGVMKLRRGFEIKEGENVLVVEDVVTTGGSVKEVINLVNSLKGNVIGVGSIVDRSDGKVNFEVPFKSVVSLYVETYEKEECPLCKEGIPLVKPGSRKF</sequence>
<reference key="1">
    <citation type="submission" date="2008-01" db="EMBL/GenBank/DDBJ databases">
        <title>Complete sequence of Thermoanaerobacter sp. X514.</title>
        <authorList>
            <consortium name="US DOE Joint Genome Institute"/>
            <person name="Copeland A."/>
            <person name="Lucas S."/>
            <person name="Lapidus A."/>
            <person name="Barry K."/>
            <person name="Glavina del Rio T."/>
            <person name="Dalin E."/>
            <person name="Tice H."/>
            <person name="Pitluck S."/>
            <person name="Bruce D."/>
            <person name="Goodwin L."/>
            <person name="Saunders E."/>
            <person name="Brettin T."/>
            <person name="Detter J.C."/>
            <person name="Han C."/>
            <person name="Schmutz J."/>
            <person name="Larimer F."/>
            <person name="Land M."/>
            <person name="Hauser L."/>
            <person name="Kyrpides N."/>
            <person name="Kim E."/>
            <person name="Hemme C."/>
            <person name="Fields M.W."/>
            <person name="He Z."/>
            <person name="Zhou J."/>
            <person name="Richardson P."/>
        </authorList>
    </citation>
    <scope>NUCLEOTIDE SEQUENCE [LARGE SCALE GENOMIC DNA]</scope>
    <source>
        <strain>X514</strain>
    </source>
</reference>
<organism>
    <name type="scientific">Thermoanaerobacter sp. (strain X514)</name>
    <dbReference type="NCBI Taxonomy" id="399726"/>
    <lineage>
        <taxon>Bacteria</taxon>
        <taxon>Bacillati</taxon>
        <taxon>Bacillota</taxon>
        <taxon>Clostridia</taxon>
        <taxon>Thermoanaerobacterales</taxon>
        <taxon>Thermoanaerobacteraceae</taxon>
        <taxon>Thermoanaerobacter</taxon>
    </lineage>
</organism>
<feature type="chain" id="PRO_1000138838" description="Orotate phosphoribosyltransferase">
    <location>
        <begin position="1"/>
        <end position="190"/>
    </location>
</feature>
<feature type="binding site" evidence="1">
    <location>
        <begin position="114"/>
        <end position="122"/>
    </location>
    <ligand>
        <name>5-phospho-alpha-D-ribose 1-diphosphate</name>
        <dbReference type="ChEBI" id="CHEBI:58017"/>
    </ligand>
</feature>
<feature type="binding site" evidence="1">
    <location>
        <position position="118"/>
    </location>
    <ligand>
        <name>orotate</name>
        <dbReference type="ChEBI" id="CHEBI:30839"/>
    </ligand>
</feature>
<feature type="binding site" evidence="1">
    <location>
        <position position="146"/>
    </location>
    <ligand>
        <name>orotate</name>
        <dbReference type="ChEBI" id="CHEBI:30839"/>
    </ligand>
</feature>
<proteinExistence type="inferred from homology"/>
<gene>
    <name evidence="1" type="primary">pyrE</name>
    <name type="ordered locus">Teth514_1813</name>
</gene>
<name>PYRE_THEPX</name>
<comment type="function">
    <text evidence="1">Catalyzes the transfer of a ribosyl phosphate group from 5-phosphoribose 1-diphosphate to orotate, leading to the formation of orotidine monophosphate (OMP).</text>
</comment>
<comment type="catalytic activity">
    <reaction evidence="1">
        <text>orotidine 5'-phosphate + diphosphate = orotate + 5-phospho-alpha-D-ribose 1-diphosphate</text>
        <dbReference type="Rhea" id="RHEA:10380"/>
        <dbReference type="ChEBI" id="CHEBI:30839"/>
        <dbReference type="ChEBI" id="CHEBI:33019"/>
        <dbReference type="ChEBI" id="CHEBI:57538"/>
        <dbReference type="ChEBI" id="CHEBI:58017"/>
        <dbReference type="EC" id="2.4.2.10"/>
    </reaction>
</comment>
<comment type="cofactor">
    <cofactor evidence="1">
        <name>Mg(2+)</name>
        <dbReference type="ChEBI" id="CHEBI:18420"/>
    </cofactor>
</comment>
<comment type="pathway">
    <text evidence="1">Pyrimidine metabolism; UMP biosynthesis via de novo pathway; UMP from orotate: step 1/2.</text>
</comment>
<comment type="subunit">
    <text evidence="1">Homodimer.</text>
</comment>
<comment type="similarity">
    <text evidence="1">Belongs to the purine/pyrimidine phosphoribosyltransferase family. PyrE subfamily.</text>
</comment>
<keyword id="KW-0328">Glycosyltransferase</keyword>
<keyword id="KW-0460">Magnesium</keyword>
<keyword id="KW-0665">Pyrimidine biosynthesis</keyword>
<keyword id="KW-0808">Transferase</keyword>
<protein>
    <recommendedName>
        <fullName evidence="1">Orotate phosphoribosyltransferase</fullName>
        <shortName evidence="1">OPRT</shortName>
        <shortName evidence="1">OPRTase</shortName>
        <ecNumber evidence="1">2.4.2.10</ecNumber>
    </recommendedName>
</protein>